<comment type="function">
    <text evidence="1">Catalyzes the transfer of the enolpyruvyl moiety of phosphoenolpyruvate (PEP) to the 5-hydroxyl of shikimate-3-phosphate (S3P) to produce enolpyruvyl shikimate-3-phosphate and inorganic phosphate.</text>
</comment>
<comment type="catalytic activity">
    <reaction evidence="1">
        <text>3-phosphoshikimate + phosphoenolpyruvate = 5-O-(1-carboxyvinyl)-3-phosphoshikimate + phosphate</text>
        <dbReference type="Rhea" id="RHEA:21256"/>
        <dbReference type="ChEBI" id="CHEBI:43474"/>
        <dbReference type="ChEBI" id="CHEBI:57701"/>
        <dbReference type="ChEBI" id="CHEBI:58702"/>
        <dbReference type="ChEBI" id="CHEBI:145989"/>
        <dbReference type="EC" id="2.5.1.19"/>
    </reaction>
    <physiologicalReaction direction="left-to-right" evidence="1">
        <dbReference type="Rhea" id="RHEA:21257"/>
    </physiologicalReaction>
</comment>
<comment type="pathway">
    <text evidence="1">Metabolic intermediate biosynthesis; chorismate biosynthesis; chorismate from D-erythrose 4-phosphate and phosphoenolpyruvate: step 6/7.</text>
</comment>
<comment type="subunit">
    <text evidence="1">Monomer.</text>
</comment>
<comment type="subcellular location">
    <subcellularLocation>
        <location evidence="1">Cytoplasm</location>
    </subcellularLocation>
</comment>
<comment type="similarity">
    <text evidence="1 2">Belongs to the EPSP synthase family.</text>
</comment>
<gene>
    <name evidence="1" type="primary">aroA</name>
    <name type="synonym">aroE</name>
    <name type="ordered locus">BSU22600</name>
</gene>
<sequence length="428" mass="45240">MKRDKVQTLHGEIHIPGDKSISHRSVMFGALAAGTTTVKNFLPGADCLSTIDCFRKMGVHIEQSSSDVVIHGKGIDALKEPESLLDVGNSGTTIRLMLGILAGRPFYSAVAGDESIAKRPMKRVTEPLKKMGAKIDGRAGGEFTPLSVSGASLKGIDYVSPVASAQIKSAVLLAGLQAEGTTTVTEPHKSRDHTERMLSAFGVKLSEDQTSVSIAGGQKLTAADIFVPGDISSAAFFLAAGAMVPNSRIVLKNVGLNPTRTGIIDVLQNMGAKLEIKPSADSGAEPYGDLIIETSSLKAVEIGGDIIPRLIDEIPIIALLATQAEGTTVIKDAAELKVKETNRIDTVVSELRKLGAEIEPTADGMKVYGKQTLKGGAAVSSHGDHRIGMMLGIASCITEEPIEIEHTDAIHVSYPTFFEHLNKLSKKS</sequence>
<reference key="1">
    <citation type="journal article" date="1986" name="Gene">
        <title>The organization and nucleotide sequence of the Bacillus subtilis hisH, tyrA and aroE genes.</title>
        <authorList>
            <person name="Henner D.J."/>
            <person name="Band L."/>
            <person name="Flaggs G."/>
            <person name="Chen E."/>
        </authorList>
    </citation>
    <scope>NUCLEOTIDE SEQUENCE [GENOMIC DNA]</scope>
</reference>
<reference key="2">
    <citation type="journal article" date="1997" name="Nature">
        <title>The complete genome sequence of the Gram-positive bacterium Bacillus subtilis.</title>
        <authorList>
            <person name="Kunst F."/>
            <person name="Ogasawara N."/>
            <person name="Moszer I."/>
            <person name="Albertini A.M."/>
            <person name="Alloni G."/>
            <person name="Azevedo V."/>
            <person name="Bertero M.G."/>
            <person name="Bessieres P."/>
            <person name="Bolotin A."/>
            <person name="Borchert S."/>
            <person name="Borriss R."/>
            <person name="Boursier L."/>
            <person name="Brans A."/>
            <person name="Braun M."/>
            <person name="Brignell S.C."/>
            <person name="Bron S."/>
            <person name="Brouillet S."/>
            <person name="Bruschi C.V."/>
            <person name="Caldwell B."/>
            <person name="Capuano V."/>
            <person name="Carter N.M."/>
            <person name="Choi S.-K."/>
            <person name="Codani J.-J."/>
            <person name="Connerton I.F."/>
            <person name="Cummings N.J."/>
            <person name="Daniel R.A."/>
            <person name="Denizot F."/>
            <person name="Devine K.M."/>
            <person name="Duesterhoeft A."/>
            <person name="Ehrlich S.D."/>
            <person name="Emmerson P.T."/>
            <person name="Entian K.-D."/>
            <person name="Errington J."/>
            <person name="Fabret C."/>
            <person name="Ferrari E."/>
            <person name="Foulger D."/>
            <person name="Fritz C."/>
            <person name="Fujita M."/>
            <person name="Fujita Y."/>
            <person name="Fuma S."/>
            <person name="Galizzi A."/>
            <person name="Galleron N."/>
            <person name="Ghim S.-Y."/>
            <person name="Glaser P."/>
            <person name="Goffeau A."/>
            <person name="Golightly E.J."/>
            <person name="Grandi G."/>
            <person name="Guiseppi G."/>
            <person name="Guy B.J."/>
            <person name="Haga K."/>
            <person name="Haiech J."/>
            <person name="Harwood C.R."/>
            <person name="Henaut A."/>
            <person name="Hilbert H."/>
            <person name="Holsappel S."/>
            <person name="Hosono S."/>
            <person name="Hullo M.-F."/>
            <person name="Itaya M."/>
            <person name="Jones L.-M."/>
            <person name="Joris B."/>
            <person name="Karamata D."/>
            <person name="Kasahara Y."/>
            <person name="Klaerr-Blanchard M."/>
            <person name="Klein C."/>
            <person name="Kobayashi Y."/>
            <person name="Koetter P."/>
            <person name="Koningstein G."/>
            <person name="Krogh S."/>
            <person name="Kumano M."/>
            <person name="Kurita K."/>
            <person name="Lapidus A."/>
            <person name="Lardinois S."/>
            <person name="Lauber J."/>
            <person name="Lazarevic V."/>
            <person name="Lee S.-M."/>
            <person name="Levine A."/>
            <person name="Liu H."/>
            <person name="Masuda S."/>
            <person name="Mauel C."/>
            <person name="Medigue C."/>
            <person name="Medina N."/>
            <person name="Mellado R.P."/>
            <person name="Mizuno M."/>
            <person name="Moestl D."/>
            <person name="Nakai S."/>
            <person name="Noback M."/>
            <person name="Noone D."/>
            <person name="O'Reilly M."/>
            <person name="Ogawa K."/>
            <person name="Ogiwara A."/>
            <person name="Oudega B."/>
            <person name="Park S.-H."/>
            <person name="Parro V."/>
            <person name="Pohl T.M."/>
            <person name="Portetelle D."/>
            <person name="Porwollik S."/>
            <person name="Prescott A.M."/>
            <person name="Presecan E."/>
            <person name="Pujic P."/>
            <person name="Purnelle B."/>
            <person name="Rapoport G."/>
            <person name="Rey M."/>
            <person name="Reynolds S."/>
            <person name="Rieger M."/>
            <person name="Rivolta C."/>
            <person name="Rocha E."/>
            <person name="Roche B."/>
            <person name="Rose M."/>
            <person name="Sadaie Y."/>
            <person name="Sato T."/>
            <person name="Scanlan E."/>
            <person name="Schleich S."/>
            <person name="Schroeter R."/>
            <person name="Scoffone F."/>
            <person name="Sekiguchi J."/>
            <person name="Sekowska A."/>
            <person name="Seror S.J."/>
            <person name="Serror P."/>
            <person name="Shin B.-S."/>
            <person name="Soldo B."/>
            <person name="Sorokin A."/>
            <person name="Tacconi E."/>
            <person name="Takagi T."/>
            <person name="Takahashi H."/>
            <person name="Takemaru K."/>
            <person name="Takeuchi M."/>
            <person name="Tamakoshi A."/>
            <person name="Tanaka T."/>
            <person name="Terpstra P."/>
            <person name="Tognoni A."/>
            <person name="Tosato V."/>
            <person name="Uchiyama S."/>
            <person name="Vandenbol M."/>
            <person name="Vannier F."/>
            <person name="Vassarotti A."/>
            <person name="Viari A."/>
            <person name="Wambutt R."/>
            <person name="Wedler E."/>
            <person name="Wedler H."/>
            <person name="Weitzenegger T."/>
            <person name="Winters P."/>
            <person name="Wipat A."/>
            <person name="Yamamoto H."/>
            <person name="Yamane K."/>
            <person name="Yasumoto K."/>
            <person name="Yata K."/>
            <person name="Yoshida K."/>
            <person name="Yoshikawa H.-F."/>
            <person name="Zumstein E."/>
            <person name="Yoshikawa H."/>
            <person name="Danchin A."/>
        </authorList>
    </citation>
    <scope>NUCLEOTIDE SEQUENCE [LARGE SCALE GENOMIC DNA]</scope>
    <source>
        <strain>168</strain>
    </source>
</reference>
<dbReference type="EC" id="2.5.1.19" evidence="1"/>
<dbReference type="EMBL" id="M80245">
    <property type="protein sequence ID" value="AAA20869.1"/>
    <property type="molecule type" value="Genomic_DNA"/>
</dbReference>
<dbReference type="EMBL" id="AL009126">
    <property type="protein sequence ID" value="CAB14176.1"/>
    <property type="molecule type" value="Genomic_DNA"/>
</dbReference>
<dbReference type="PIR" id="C26532">
    <property type="entry name" value="C26532"/>
</dbReference>
<dbReference type="RefSeq" id="NP_390141.1">
    <property type="nucleotide sequence ID" value="NC_000964.3"/>
</dbReference>
<dbReference type="RefSeq" id="WP_003246068.1">
    <property type="nucleotide sequence ID" value="NZ_OZ025638.1"/>
</dbReference>
<dbReference type="SMR" id="P20691"/>
<dbReference type="FunCoup" id="P20691">
    <property type="interactions" value="469"/>
</dbReference>
<dbReference type="IntAct" id="P20691">
    <property type="interactions" value="1"/>
</dbReference>
<dbReference type="MINT" id="P20691"/>
<dbReference type="STRING" id="224308.BSU22600"/>
<dbReference type="jPOST" id="P20691"/>
<dbReference type="PaxDb" id="224308-BSU22600"/>
<dbReference type="EnsemblBacteria" id="CAB14176">
    <property type="protein sequence ID" value="CAB14176"/>
    <property type="gene ID" value="BSU_22600"/>
</dbReference>
<dbReference type="GeneID" id="939014"/>
<dbReference type="KEGG" id="bsu:BSU22600"/>
<dbReference type="PATRIC" id="fig|224308.179.peg.2464"/>
<dbReference type="eggNOG" id="COG0128">
    <property type="taxonomic scope" value="Bacteria"/>
</dbReference>
<dbReference type="InParanoid" id="P20691"/>
<dbReference type="OrthoDB" id="9809920at2"/>
<dbReference type="PhylomeDB" id="P20691"/>
<dbReference type="BioCyc" id="BSUB:BSU22600-MONOMER"/>
<dbReference type="BioCyc" id="MetaCyc:AROEBACSU-MONOMER"/>
<dbReference type="SABIO-RK" id="P20691"/>
<dbReference type="UniPathway" id="UPA00053">
    <property type="reaction ID" value="UER00089"/>
</dbReference>
<dbReference type="Proteomes" id="UP000001570">
    <property type="component" value="Chromosome"/>
</dbReference>
<dbReference type="GO" id="GO:0005737">
    <property type="term" value="C:cytoplasm"/>
    <property type="evidence" value="ECO:0007669"/>
    <property type="project" value="UniProtKB-SubCell"/>
</dbReference>
<dbReference type="GO" id="GO:0003866">
    <property type="term" value="F:3-phosphoshikimate 1-carboxyvinyltransferase activity"/>
    <property type="evidence" value="ECO:0000318"/>
    <property type="project" value="GO_Central"/>
</dbReference>
<dbReference type="GO" id="GO:0008652">
    <property type="term" value="P:amino acid biosynthetic process"/>
    <property type="evidence" value="ECO:0007669"/>
    <property type="project" value="UniProtKB-KW"/>
</dbReference>
<dbReference type="GO" id="GO:0009073">
    <property type="term" value="P:aromatic amino acid family biosynthetic process"/>
    <property type="evidence" value="ECO:0007669"/>
    <property type="project" value="UniProtKB-KW"/>
</dbReference>
<dbReference type="GO" id="GO:0009423">
    <property type="term" value="P:chorismate biosynthetic process"/>
    <property type="evidence" value="ECO:0000318"/>
    <property type="project" value="GO_Central"/>
</dbReference>
<dbReference type="CDD" id="cd01556">
    <property type="entry name" value="EPSP_synthase"/>
    <property type="match status" value="1"/>
</dbReference>
<dbReference type="FunFam" id="3.65.10.10:FF:000005">
    <property type="entry name" value="3-phosphoshikimate 1-carboxyvinyltransferase"/>
    <property type="match status" value="1"/>
</dbReference>
<dbReference type="FunFam" id="3.65.10.10:FF:000006">
    <property type="entry name" value="3-phosphoshikimate 1-carboxyvinyltransferase"/>
    <property type="match status" value="1"/>
</dbReference>
<dbReference type="Gene3D" id="3.65.10.10">
    <property type="entry name" value="Enolpyruvate transferase domain"/>
    <property type="match status" value="2"/>
</dbReference>
<dbReference type="HAMAP" id="MF_00210">
    <property type="entry name" value="EPSP_synth"/>
    <property type="match status" value="1"/>
</dbReference>
<dbReference type="InterPro" id="IPR001986">
    <property type="entry name" value="Enolpyruvate_Tfrase_dom"/>
</dbReference>
<dbReference type="InterPro" id="IPR036968">
    <property type="entry name" value="Enolpyruvate_Tfrase_sf"/>
</dbReference>
<dbReference type="InterPro" id="IPR006264">
    <property type="entry name" value="EPSP_synthase"/>
</dbReference>
<dbReference type="InterPro" id="IPR023193">
    <property type="entry name" value="EPSP_synthase_CS"/>
</dbReference>
<dbReference type="InterPro" id="IPR013792">
    <property type="entry name" value="RNA3'P_cycl/enolpyr_Trfase_a/b"/>
</dbReference>
<dbReference type="NCBIfam" id="TIGR01356">
    <property type="entry name" value="aroA"/>
    <property type="match status" value="1"/>
</dbReference>
<dbReference type="PANTHER" id="PTHR21090">
    <property type="entry name" value="AROM/DEHYDROQUINATE SYNTHASE"/>
    <property type="match status" value="1"/>
</dbReference>
<dbReference type="PANTHER" id="PTHR21090:SF5">
    <property type="entry name" value="PENTAFUNCTIONAL AROM POLYPEPTIDE"/>
    <property type="match status" value="1"/>
</dbReference>
<dbReference type="Pfam" id="PF00275">
    <property type="entry name" value="EPSP_synthase"/>
    <property type="match status" value="1"/>
</dbReference>
<dbReference type="PIRSF" id="PIRSF000505">
    <property type="entry name" value="EPSPS"/>
    <property type="match status" value="1"/>
</dbReference>
<dbReference type="SUPFAM" id="SSF55205">
    <property type="entry name" value="EPT/RTPC-like"/>
    <property type="match status" value="1"/>
</dbReference>
<dbReference type="PROSITE" id="PS00104">
    <property type="entry name" value="EPSP_SYNTHASE_1"/>
    <property type="match status" value="1"/>
</dbReference>
<dbReference type="PROSITE" id="PS00885">
    <property type="entry name" value="EPSP_SYNTHASE_2"/>
    <property type="match status" value="1"/>
</dbReference>
<evidence type="ECO:0000255" key="1">
    <source>
        <dbReference type="HAMAP-Rule" id="MF_00210"/>
    </source>
</evidence>
<evidence type="ECO:0000305" key="2"/>
<proteinExistence type="inferred from homology"/>
<accession>P20691</accession>
<feature type="chain" id="PRO_0000088227" description="3-phosphoshikimate 1-carboxyvinyltransferase">
    <location>
        <begin position="1"/>
        <end position="428"/>
    </location>
</feature>
<feature type="active site" description="Proton acceptor" evidence="1">
    <location>
        <position position="312"/>
    </location>
</feature>
<feature type="binding site" evidence="1">
    <location>
        <position position="19"/>
    </location>
    <ligand>
        <name>3-phosphoshikimate</name>
        <dbReference type="ChEBI" id="CHEBI:145989"/>
    </ligand>
</feature>
<feature type="binding site" evidence="1">
    <location>
        <position position="19"/>
    </location>
    <ligand>
        <name>phosphoenolpyruvate</name>
        <dbReference type="ChEBI" id="CHEBI:58702"/>
    </ligand>
</feature>
<feature type="binding site" evidence="1">
    <location>
        <position position="20"/>
    </location>
    <ligand>
        <name>3-phosphoshikimate</name>
        <dbReference type="ChEBI" id="CHEBI:145989"/>
    </ligand>
</feature>
<feature type="binding site" evidence="1">
    <location>
        <position position="24"/>
    </location>
    <ligand>
        <name>3-phosphoshikimate</name>
        <dbReference type="ChEBI" id="CHEBI:145989"/>
    </ligand>
</feature>
<feature type="binding site" evidence="1">
    <location>
        <position position="91"/>
    </location>
    <ligand>
        <name>phosphoenolpyruvate</name>
        <dbReference type="ChEBI" id="CHEBI:58702"/>
    </ligand>
</feature>
<feature type="binding site" evidence="1">
    <location>
        <position position="119"/>
    </location>
    <ligand>
        <name>phosphoenolpyruvate</name>
        <dbReference type="ChEBI" id="CHEBI:58702"/>
    </ligand>
</feature>
<feature type="binding site" evidence="1">
    <location>
        <position position="164"/>
    </location>
    <ligand>
        <name>3-phosphoshikimate</name>
        <dbReference type="ChEBI" id="CHEBI:145989"/>
    </ligand>
</feature>
<feature type="binding site" evidence="1">
    <location>
        <position position="166"/>
    </location>
    <ligand>
        <name>3-phosphoshikimate</name>
        <dbReference type="ChEBI" id="CHEBI:145989"/>
    </ligand>
</feature>
<feature type="binding site" evidence="1">
    <location>
        <position position="166"/>
    </location>
    <ligand>
        <name>phosphoenolpyruvate</name>
        <dbReference type="ChEBI" id="CHEBI:58702"/>
    </ligand>
</feature>
<feature type="binding site" evidence="1">
    <location>
        <position position="312"/>
    </location>
    <ligand>
        <name>3-phosphoshikimate</name>
        <dbReference type="ChEBI" id="CHEBI:145989"/>
    </ligand>
</feature>
<feature type="binding site" evidence="1">
    <location>
        <position position="339"/>
    </location>
    <ligand>
        <name>3-phosphoshikimate</name>
        <dbReference type="ChEBI" id="CHEBI:145989"/>
    </ligand>
</feature>
<feature type="binding site" evidence="1">
    <location>
        <position position="343"/>
    </location>
    <ligand>
        <name>phosphoenolpyruvate</name>
        <dbReference type="ChEBI" id="CHEBI:58702"/>
    </ligand>
</feature>
<feature type="binding site" evidence="1">
    <location>
        <position position="386"/>
    </location>
    <ligand>
        <name>phosphoenolpyruvate</name>
        <dbReference type="ChEBI" id="CHEBI:58702"/>
    </ligand>
</feature>
<organism>
    <name type="scientific">Bacillus subtilis (strain 168)</name>
    <dbReference type="NCBI Taxonomy" id="224308"/>
    <lineage>
        <taxon>Bacteria</taxon>
        <taxon>Bacillati</taxon>
        <taxon>Bacillota</taxon>
        <taxon>Bacilli</taxon>
        <taxon>Bacillales</taxon>
        <taxon>Bacillaceae</taxon>
        <taxon>Bacillus</taxon>
    </lineage>
</organism>
<protein>
    <recommendedName>
        <fullName evidence="1">3-phosphoshikimate 1-carboxyvinyltransferase</fullName>
        <ecNumber evidence="1">2.5.1.19</ecNumber>
    </recommendedName>
    <alternativeName>
        <fullName evidence="1">5-enolpyruvylshikimate-3-phosphate synthase</fullName>
        <shortName evidence="1">EPSP synthase</shortName>
        <shortName evidence="1">EPSPS</shortName>
    </alternativeName>
</protein>
<name>AROA_BACSU</name>
<keyword id="KW-0028">Amino-acid biosynthesis</keyword>
<keyword id="KW-0057">Aromatic amino acid biosynthesis</keyword>
<keyword id="KW-0963">Cytoplasm</keyword>
<keyword id="KW-1185">Reference proteome</keyword>
<keyword id="KW-0808">Transferase</keyword>